<evidence type="ECO:0000255" key="1">
    <source>
        <dbReference type="HAMAP-Rule" id="MF_00187"/>
    </source>
</evidence>
<protein>
    <recommendedName>
        <fullName evidence="1">Sulfur carrier protein FdhD</fullName>
    </recommendedName>
</protein>
<accession>B7M697</accession>
<proteinExistence type="inferred from homology"/>
<gene>
    <name evidence="1" type="primary">fdhD</name>
    <name type="ordered locus">ECIAI1_4100</name>
</gene>
<keyword id="KW-0963">Cytoplasm</keyword>
<keyword id="KW-0501">Molybdenum cofactor biosynthesis</keyword>
<dbReference type="EMBL" id="CU928160">
    <property type="protein sequence ID" value="CAR00871.1"/>
    <property type="molecule type" value="Genomic_DNA"/>
</dbReference>
<dbReference type="RefSeq" id="WP_000753617.1">
    <property type="nucleotide sequence ID" value="NC_011741.1"/>
</dbReference>
<dbReference type="SMR" id="B7M697"/>
<dbReference type="GeneID" id="93778043"/>
<dbReference type="KEGG" id="ecr:ECIAI1_4100"/>
<dbReference type="HOGENOM" id="CLU_056887_2_0_6"/>
<dbReference type="GO" id="GO:0005737">
    <property type="term" value="C:cytoplasm"/>
    <property type="evidence" value="ECO:0007669"/>
    <property type="project" value="UniProtKB-SubCell"/>
</dbReference>
<dbReference type="GO" id="GO:0097163">
    <property type="term" value="F:sulfur carrier activity"/>
    <property type="evidence" value="ECO:0007669"/>
    <property type="project" value="UniProtKB-UniRule"/>
</dbReference>
<dbReference type="GO" id="GO:0016783">
    <property type="term" value="F:sulfurtransferase activity"/>
    <property type="evidence" value="ECO:0007669"/>
    <property type="project" value="InterPro"/>
</dbReference>
<dbReference type="GO" id="GO:0006777">
    <property type="term" value="P:Mo-molybdopterin cofactor biosynthetic process"/>
    <property type="evidence" value="ECO:0007669"/>
    <property type="project" value="UniProtKB-UniRule"/>
</dbReference>
<dbReference type="FunFam" id="3.10.20.10:FF:000003">
    <property type="entry name" value="Sulfur carrier protein FdhD"/>
    <property type="match status" value="1"/>
</dbReference>
<dbReference type="FunFam" id="3.40.140.10:FF:000027">
    <property type="entry name" value="Sulfur carrier protein FdhD"/>
    <property type="match status" value="1"/>
</dbReference>
<dbReference type="Gene3D" id="3.10.20.10">
    <property type="match status" value="1"/>
</dbReference>
<dbReference type="Gene3D" id="3.40.140.10">
    <property type="entry name" value="Cytidine Deaminase, domain 2"/>
    <property type="match status" value="1"/>
</dbReference>
<dbReference type="HAMAP" id="MF_00187">
    <property type="entry name" value="FdhD"/>
    <property type="match status" value="1"/>
</dbReference>
<dbReference type="InterPro" id="IPR016193">
    <property type="entry name" value="Cytidine_deaminase-like"/>
</dbReference>
<dbReference type="InterPro" id="IPR003786">
    <property type="entry name" value="FdhD"/>
</dbReference>
<dbReference type="NCBIfam" id="TIGR00129">
    <property type="entry name" value="fdhD_narQ"/>
    <property type="match status" value="1"/>
</dbReference>
<dbReference type="PANTHER" id="PTHR30592">
    <property type="entry name" value="FORMATE DEHYDROGENASE"/>
    <property type="match status" value="1"/>
</dbReference>
<dbReference type="PANTHER" id="PTHR30592:SF1">
    <property type="entry name" value="SULFUR CARRIER PROTEIN FDHD"/>
    <property type="match status" value="1"/>
</dbReference>
<dbReference type="Pfam" id="PF02634">
    <property type="entry name" value="FdhD-NarQ"/>
    <property type="match status" value="1"/>
</dbReference>
<dbReference type="PIRSF" id="PIRSF015626">
    <property type="entry name" value="FdhD"/>
    <property type="match status" value="1"/>
</dbReference>
<dbReference type="SUPFAM" id="SSF53927">
    <property type="entry name" value="Cytidine deaminase-like"/>
    <property type="match status" value="1"/>
</dbReference>
<feature type="chain" id="PRO_1000118559" description="Sulfur carrier protein FdhD">
    <location>
        <begin position="1"/>
        <end position="277"/>
    </location>
</feature>
<feature type="active site" description="Cysteine persulfide intermediate" evidence="1">
    <location>
        <position position="121"/>
    </location>
</feature>
<feature type="binding site" evidence="1">
    <location>
        <begin position="260"/>
        <end position="265"/>
    </location>
    <ligand>
        <name>Mo-bis(molybdopterin guanine dinucleotide)</name>
        <dbReference type="ChEBI" id="CHEBI:60539"/>
    </ligand>
</feature>
<comment type="function">
    <text evidence="1">Required for formate dehydrogenase (FDH) activity. Acts as a sulfur carrier protein that transfers sulfur from IscS to the molybdenum cofactor prior to its insertion into FDH.</text>
</comment>
<comment type="subcellular location">
    <subcellularLocation>
        <location evidence="1">Cytoplasm</location>
    </subcellularLocation>
</comment>
<comment type="similarity">
    <text evidence="1">Belongs to the FdhD family.</text>
</comment>
<sequence>MKKTQRKEIENVTNITGVRQIELWRRDDLQHPRLDEVAEEVPVALVYNGISHVVMMASPKDLEYFALGFSLSEGIIESPRDIFGMDVVPSCNGLEVQIELSSRRFMGLKERRRALAGRTGCGVCGVEQLNDIGKPVQPLPFTQTFDLNKLDDALRHLNDFQPVGQLTGCTHAAAWMLPSGELVGGHEDVGRHVALDKLLGRRSQEGESWQQGAVLVSSRASYEMVQKSAMCGVEILFAVSAATTLAVEVAERCNLTLVGFCKPGRATVYTHPQRLSN</sequence>
<organism>
    <name type="scientific">Escherichia coli O8 (strain IAI1)</name>
    <dbReference type="NCBI Taxonomy" id="585034"/>
    <lineage>
        <taxon>Bacteria</taxon>
        <taxon>Pseudomonadati</taxon>
        <taxon>Pseudomonadota</taxon>
        <taxon>Gammaproteobacteria</taxon>
        <taxon>Enterobacterales</taxon>
        <taxon>Enterobacteriaceae</taxon>
        <taxon>Escherichia</taxon>
    </lineage>
</organism>
<reference key="1">
    <citation type="journal article" date="2009" name="PLoS Genet.">
        <title>Organised genome dynamics in the Escherichia coli species results in highly diverse adaptive paths.</title>
        <authorList>
            <person name="Touchon M."/>
            <person name="Hoede C."/>
            <person name="Tenaillon O."/>
            <person name="Barbe V."/>
            <person name="Baeriswyl S."/>
            <person name="Bidet P."/>
            <person name="Bingen E."/>
            <person name="Bonacorsi S."/>
            <person name="Bouchier C."/>
            <person name="Bouvet O."/>
            <person name="Calteau A."/>
            <person name="Chiapello H."/>
            <person name="Clermont O."/>
            <person name="Cruveiller S."/>
            <person name="Danchin A."/>
            <person name="Diard M."/>
            <person name="Dossat C."/>
            <person name="Karoui M.E."/>
            <person name="Frapy E."/>
            <person name="Garry L."/>
            <person name="Ghigo J.M."/>
            <person name="Gilles A.M."/>
            <person name="Johnson J."/>
            <person name="Le Bouguenec C."/>
            <person name="Lescat M."/>
            <person name="Mangenot S."/>
            <person name="Martinez-Jehanne V."/>
            <person name="Matic I."/>
            <person name="Nassif X."/>
            <person name="Oztas S."/>
            <person name="Petit M.A."/>
            <person name="Pichon C."/>
            <person name="Rouy Z."/>
            <person name="Ruf C.S."/>
            <person name="Schneider D."/>
            <person name="Tourret J."/>
            <person name="Vacherie B."/>
            <person name="Vallenet D."/>
            <person name="Medigue C."/>
            <person name="Rocha E.P.C."/>
            <person name="Denamur E."/>
        </authorList>
    </citation>
    <scope>NUCLEOTIDE SEQUENCE [LARGE SCALE GENOMIC DNA]</scope>
    <source>
        <strain>IAI1</strain>
    </source>
</reference>
<name>FDHD_ECO8A</name>